<name>ARX1_CANAL</name>
<organism>
    <name type="scientific">Candida albicans (strain SC5314 / ATCC MYA-2876)</name>
    <name type="common">Yeast</name>
    <dbReference type="NCBI Taxonomy" id="237561"/>
    <lineage>
        <taxon>Eukaryota</taxon>
        <taxon>Fungi</taxon>
        <taxon>Dikarya</taxon>
        <taxon>Ascomycota</taxon>
        <taxon>Saccharomycotina</taxon>
        <taxon>Pichiomycetes</taxon>
        <taxon>Debaryomycetaceae</taxon>
        <taxon>Candida/Lodderomyces clade</taxon>
        <taxon>Candida</taxon>
    </lineage>
</organism>
<accession>Q5AI37</accession>
<accession>A0A1D8PCY6</accession>
<protein>
    <recommendedName>
        <fullName>Probable metalloprotease ARX1</fullName>
        <ecNumber>3.-.-.-</ecNumber>
    </recommendedName>
    <alternativeName>
        <fullName>Associated with ribosomal export complex protein 1</fullName>
    </alternativeName>
</protein>
<sequence length="564" mass="62233">MQLAVRQEDADILLKQKNVLDELVVEKYRVAGQITQTALAYITSLINNSYHLQTSPKLTIQQLCLLTDSFLLKLLSRQYVNKVNEKGIAHPTTINVNQLLNGFSPEIDDEREFFLNQGDVVTISLGVHIDGYTSQVSHTLVIYPPSADAKPEGPLLGSNADALCACHLATESVVVLLGCSLSPEKLPANLKNVSNTVTGSQIRELVDAIADSFNCVVVPGSKIRRVRRFLAGQAEGIVAERDFKGVVWDESHQEARLLKQSNNTSTDLILSDSNKPVQTNNSSAIPTDDFVVVPGEVYQIDIRMTGLSDVNEIGIVTTEEIDHFTGKNNKQDFNAKSSIFIRDFAVTHQLKLKTSKKLLGEIDRQFSVYPFKLDYASKNFPINTESSEDEIKQQIAAIGQDMKSNRLGAAELSNRHLIQPKPIQTTKFIPLKEILLSANPTGKHGIDATKPVLPGMEIPLPNLGVSSLKLKSLLKTGRSINNVRESTTVAINENNQELIRLTGGEATAKSNWVHSQYKLPASLNETIGQLVQISKDKRFGIKIKEVVPYKVQQSNMSVESMQID</sequence>
<comment type="function">
    <text evidence="1">Probable metalloprotease involved in proper assembly of pre-ribosomal particles during the biogenesis of the 60S ribosomal subunit. Accompanies the pre-60S particles to the cytoplasm (By similarity).</text>
</comment>
<comment type="subunit">
    <text evidence="1">Component of the nucleoplasmic and cytoplasmic pre-60S ribosomal particles.</text>
</comment>
<comment type="subcellular location">
    <subcellularLocation>
        <location evidence="1">Cytoplasm</location>
    </subcellularLocation>
    <subcellularLocation>
        <location evidence="1">Nucleus</location>
    </subcellularLocation>
</comment>
<comment type="similarity">
    <text evidence="2">Belongs to the peptidase M24 family.</text>
</comment>
<dbReference type="EC" id="3.-.-.-"/>
<dbReference type="EMBL" id="CP017623">
    <property type="protein sequence ID" value="AOW26004.1"/>
    <property type="molecule type" value="Genomic_DNA"/>
</dbReference>
<dbReference type="RefSeq" id="XP_721513.1">
    <property type="nucleotide sequence ID" value="XM_716420.1"/>
</dbReference>
<dbReference type="SMR" id="Q5AI37"/>
<dbReference type="FunCoup" id="Q5AI37">
    <property type="interactions" value="409"/>
</dbReference>
<dbReference type="STRING" id="237561.Q5AI37"/>
<dbReference type="EnsemblFungi" id="C1_03230C_A-T">
    <property type="protein sequence ID" value="C1_03230C_A-T-p1"/>
    <property type="gene ID" value="C1_03230C_A"/>
</dbReference>
<dbReference type="GeneID" id="3636811"/>
<dbReference type="KEGG" id="cal:CAALFM_C103230CA"/>
<dbReference type="CGD" id="CAL0000194302">
    <property type="gene designation" value="ARX1"/>
</dbReference>
<dbReference type="VEuPathDB" id="FungiDB:C1_03230C_A"/>
<dbReference type="eggNOG" id="KOG2776">
    <property type="taxonomic scope" value="Eukaryota"/>
</dbReference>
<dbReference type="HOGENOM" id="CLU_477525_0_0_1"/>
<dbReference type="InParanoid" id="Q5AI37"/>
<dbReference type="OMA" id="KPSWVHS"/>
<dbReference type="OrthoDB" id="5876363at2759"/>
<dbReference type="PRO" id="PR:Q5AI37"/>
<dbReference type="Proteomes" id="UP000000559">
    <property type="component" value="Chromosome 1"/>
</dbReference>
<dbReference type="GO" id="GO:0005737">
    <property type="term" value="C:cytoplasm"/>
    <property type="evidence" value="ECO:0007669"/>
    <property type="project" value="UniProtKB-SubCell"/>
</dbReference>
<dbReference type="GO" id="GO:0005730">
    <property type="term" value="C:nucleolus"/>
    <property type="evidence" value="ECO:0007669"/>
    <property type="project" value="EnsemblFungi"/>
</dbReference>
<dbReference type="GO" id="GO:0005654">
    <property type="term" value="C:nucleoplasm"/>
    <property type="evidence" value="ECO:0007669"/>
    <property type="project" value="EnsemblFungi"/>
</dbReference>
<dbReference type="GO" id="GO:0030687">
    <property type="term" value="C:preribosome, large subunit precursor"/>
    <property type="evidence" value="ECO:0007669"/>
    <property type="project" value="EnsemblFungi"/>
</dbReference>
<dbReference type="GO" id="GO:0046872">
    <property type="term" value="F:metal ion binding"/>
    <property type="evidence" value="ECO:0007669"/>
    <property type="project" value="UniProtKB-KW"/>
</dbReference>
<dbReference type="GO" id="GO:0008237">
    <property type="term" value="F:metallopeptidase activity"/>
    <property type="evidence" value="ECO:0007669"/>
    <property type="project" value="UniProtKB-KW"/>
</dbReference>
<dbReference type="GO" id="GO:0006508">
    <property type="term" value="P:proteolysis"/>
    <property type="evidence" value="ECO:0007669"/>
    <property type="project" value="UniProtKB-KW"/>
</dbReference>
<dbReference type="GO" id="GO:0000055">
    <property type="term" value="P:ribosomal large subunit export from nucleus"/>
    <property type="evidence" value="ECO:0007669"/>
    <property type="project" value="EnsemblFungi"/>
</dbReference>
<dbReference type="FunFam" id="3.90.230.10:FF:000024">
    <property type="entry name" value="Probable metalloprotease ARX1"/>
    <property type="match status" value="1"/>
</dbReference>
<dbReference type="Gene3D" id="3.90.230.10">
    <property type="entry name" value="Creatinase/methionine aminopeptidase superfamily"/>
    <property type="match status" value="1"/>
</dbReference>
<dbReference type="Gene3D" id="1.10.10.10">
    <property type="entry name" value="Winged helix-like DNA-binding domain superfamily/Winged helix DNA-binding domain"/>
    <property type="match status" value="1"/>
</dbReference>
<dbReference type="InterPro" id="IPR036005">
    <property type="entry name" value="Creatinase/aminopeptidase-like"/>
</dbReference>
<dbReference type="InterPro" id="IPR047113">
    <property type="entry name" value="PA2G4/ARX1"/>
</dbReference>
<dbReference type="InterPro" id="IPR000994">
    <property type="entry name" value="Pept_M24"/>
</dbReference>
<dbReference type="InterPro" id="IPR036388">
    <property type="entry name" value="WH-like_DNA-bd_sf"/>
</dbReference>
<dbReference type="PANTHER" id="PTHR10804:SF102">
    <property type="entry name" value="METALLOPROTEASE ARX1-RELATED"/>
    <property type="match status" value="1"/>
</dbReference>
<dbReference type="PANTHER" id="PTHR10804">
    <property type="entry name" value="PROTEASE FAMILY M24 METHIONYL AMINOPEPTIDASE, AMINOPEPTIDASE P"/>
    <property type="match status" value="1"/>
</dbReference>
<dbReference type="Pfam" id="PF00557">
    <property type="entry name" value="Peptidase_M24"/>
    <property type="match status" value="1"/>
</dbReference>
<dbReference type="SUPFAM" id="SSF55920">
    <property type="entry name" value="Creatinase/aminopeptidase"/>
    <property type="match status" value="1"/>
</dbReference>
<keyword id="KW-0963">Cytoplasm</keyword>
<keyword id="KW-0378">Hydrolase</keyword>
<keyword id="KW-0479">Metal-binding</keyword>
<keyword id="KW-0482">Metalloprotease</keyword>
<keyword id="KW-0539">Nucleus</keyword>
<keyword id="KW-0645">Protease</keyword>
<keyword id="KW-1185">Reference proteome</keyword>
<reference key="1">
    <citation type="journal article" date="2004" name="Proc. Natl. Acad. Sci. U.S.A.">
        <title>The diploid genome sequence of Candida albicans.</title>
        <authorList>
            <person name="Jones T."/>
            <person name="Federspiel N.A."/>
            <person name="Chibana H."/>
            <person name="Dungan J."/>
            <person name="Kalman S."/>
            <person name="Magee B.B."/>
            <person name="Newport G."/>
            <person name="Thorstenson Y.R."/>
            <person name="Agabian N."/>
            <person name="Magee P.T."/>
            <person name="Davis R.W."/>
            <person name="Scherer S."/>
        </authorList>
    </citation>
    <scope>NUCLEOTIDE SEQUENCE [LARGE SCALE GENOMIC DNA]</scope>
    <source>
        <strain>SC5314 / ATCC MYA-2876</strain>
    </source>
</reference>
<reference key="2">
    <citation type="journal article" date="2007" name="Genome Biol.">
        <title>Assembly of the Candida albicans genome into sixteen supercontigs aligned on the eight chromosomes.</title>
        <authorList>
            <person name="van het Hoog M."/>
            <person name="Rast T.J."/>
            <person name="Martchenko M."/>
            <person name="Grindle S."/>
            <person name="Dignard D."/>
            <person name="Hogues H."/>
            <person name="Cuomo C."/>
            <person name="Berriman M."/>
            <person name="Scherer S."/>
            <person name="Magee B.B."/>
            <person name="Whiteway M."/>
            <person name="Chibana H."/>
            <person name="Nantel A."/>
            <person name="Magee P.T."/>
        </authorList>
    </citation>
    <scope>GENOME REANNOTATION</scope>
    <source>
        <strain>SC5314 / ATCC MYA-2876</strain>
    </source>
</reference>
<reference key="3">
    <citation type="journal article" date="2013" name="Genome Biol.">
        <title>Assembly of a phased diploid Candida albicans genome facilitates allele-specific measurements and provides a simple model for repeat and indel structure.</title>
        <authorList>
            <person name="Muzzey D."/>
            <person name="Schwartz K."/>
            <person name="Weissman J.S."/>
            <person name="Sherlock G."/>
        </authorList>
    </citation>
    <scope>NUCLEOTIDE SEQUENCE [LARGE SCALE GENOMIC DNA]</scope>
    <scope>GENOME REANNOTATION</scope>
    <source>
        <strain>SC5314 / ATCC MYA-2876</strain>
    </source>
</reference>
<feature type="chain" id="PRO_0000148993" description="Probable metalloprotease ARX1">
    <location>
        <begin position="1"/>
        <end position="564"/>
    </location>
</feature>
<gene>
    <name type="primary">ARX1</name>
    <name type="ordered locus">CAALFM_C103230CA</name>
    <name type="ORF">CaO19.10533</name>
    <name type="ORF">CaO19.3015</name>
</gene>
<proteinExistence type="inferred from homology"/>
<evidence type="ECO:0000250" key="1"/>
<evidence type="ECO:0000305" key="2"/>